<proteinExistence type="evidence at protein level"/>
<evidence type="ECO:0000255" key="1"/>
<evidence type="ECO:0000305" key="2"/>
<organism>
    <name type="scientific">Trichomonas vaginalis</name>
    <dbReference type="NCBI Taxonomy" id="5722"/>
    <lineage>
        <taxon>Eukaryota</taxon>
        <taxon>Metamonada</taxon>
        <taxon>Parabasalia</taxon>
        <taxon>Trichomonadida</taxon>
        <taxon>Trichomonadidae</taxon>
        <taxon>Trichomonas</taxon>
    </lineage>
</organism>
<keyword id="KW-0067">ATP-binding</keyword>
<keyword id="KW-0903">Direct protein sequencing</keyword>
<keyword id="KW-0324">Glycolysis</keyword>
<keyword id="KW-0418">Kinase</keyword>
<keyword id="KW-0547">Nucleotide-binding</keyword>
<keyword id="KW-0808">Transferase</keyword>
<protein>
    <recommendedName>
        <fullName>Glucokinase 1</fullName>
        <ecNumber>2.7.1.2</ecNumber>
    </recommendedName>
    <alternativeName>
        <fullName>Glucose kinase 1</fullName>
    </alternativeName>
    <alternativeName>
        <fullName>Hexokinase-1</fullName>
    </alternativeName>
</protein>
<name>GLK1_TRIVA</name>
<reference key="1">
    <citation type="journal article" date="2001" name="Gene">
        <title>Evolutionary relationships of the glucokinase from the amitochondriate protist, Trichomonas vaginalis.</title>
        <authorList>
            <person name="Wu G."/>
            <person name="Henze K."/>
            <person name="Mueller M."/>
        </authorList>
    </citation>
    <scope>NUCLEOTIDE SEQUENCE [GENOMIC DNA]</scope>
    <scope>PARTIAL PROTEIN SEQUENCE</scope>
    <scope>CHARACTERIZATION</scope>
    <source>
        <strain>ATCC 30001 / NIH-C1</strain>
    </source>
</reference>
<dbReference type="EC" id="2.7.1.2"/>
<dbReference type="EMBL" id="AF248652">
    <property type="protein sequence ID" value="AAG17616.1"/>
    <property type="molecule type" value="Genomic_DNA"/>
</dbReference>
<dbReference type="SMR" id="Q9GTW9"/>
<dbReference type="VEuPathDB" id="TrichDB:TVAG_092750"/>
<dbReference type="VEuPathDB" id="TrichDB:TVAGG3_0060660"/>
<dbReference type="eggNOG" id="ENOG502S3Y5">
    <property type="taxonomic scope" value="Eukaryota"/>
</dbReference>
<dbReference type="GO" id="GO:0005524">
    <property type="term" value="F:ATP binding"/>
    <property type="evidence" value="ECO:0007669"/>
    <property type="project" value="UniProtKB-KW"/>
</dbReference>
<dbReference type="GO" id="GO:0005536">
    <property type="term" value="F:D-glucose binding"/>
    <property type="evidence" value="ECO:0007669"/>
    <property type="project" value="InterPro"/>
</dbReference>
<dbReference type="GO" id="GO:0004340">
    <property type="term" value="F:glucokinase activity"/>
    <property type="evidence" value="ECO:0007669"/>
    <property type="project" value="UniProtKB-EC"/>
</dbReference>
<dbReference type="GO" id="GO:0006096">
    <property type="term" value="P:glycolytic process"/>
    <property type="evidence" value="ECO:0007669"/>
    <property type="project" value="UniProtKB-KW"/>
</dbReference>
<dbReference type="CDD" id="cd24008">
    <property type="entry name" value="ASKHA_NBD_GLK"/>
    <property type="match status" value="1"/>
</dbReference>
<dbReference type="Gene3D" id="3.30.420.40">
    <property type="match status" value="1"/>
</dbReference>
<dbReference type="Gene3D" id="3.40.367.20">
    <property type="match status" value="1"/>
</dbReference>
<dbReference type="InterPro" id="IPR043129">
    <property type="entry name" value="ATPase_NBD"/>
</dbReference>
<dbReference type="InterPro" id="IPR003836">
    <property type="entry name" value="Glucokinase"/>
</dbReference>
<dbReference type="PANTHER" id="PTHR47450">
    <property type="entry name" value="GLUCOKINASE"/>
    <property type="match status" value="1"/>
</dbReference>
<dbReference type="PANTHER" id="PTHR47450:SF1">
    <property type="entry name" value="GLUCOKINASE"/>
    <property type="match status" value="1"/>
</dbReference>
<dbReference type="Pfam" id="PF02685">
    <property type="entry name" value="Glucokinase"/>
    <property type="match status" value="1"/>
</dbReference>
<dbReference type="SUPFAM" id="SSF53067">
    <property type="entry name" value="Actin-like ATPase domain"/>
    <property type="match status" value="1"/>
</dbReference>
<accession>Q9GTW9</accession>
<feature type="chain" id="PRO_0000215151" description="Glucokinase 1">
    <location>
        <begin position="1"/>
        <end position="375"/>
    </location>
</feature>
<feature type="binding site" evidence="1">
    <location>
        <begin position="25"/>
        <end position="30"/>
    </location>
    <ligand>
        <name>ATP</name>
        <dbReference type="ChEBI" id="CHEBI:30616"/>
    </ligand>
</feature>
<comment type="catalytic activity">
    <reaction>
        <text>D-glucose + ATP = D-glucose 6-phosphate + ADP + H(+)</text>
        <dbReference type="Rhea" id="RHEA:17825"/>
        <dbReference type="ChEBI" id="CHEBI:4167"/>
        <dbReference type="ChEBI" id="CHEBI:15378"/>
        <dbReference type="ChEBI" id="CHEBI:30616"/>
        <dbReference type="ChEBI" id="CHEBI:61548"/>
        <dbReference type="ChEBI" id="CHEBI:456216"/>
        <dbReference type="EC" id="2.7.1.2"/>
    </reaction>
</comment>
<comment type="subunit">
    <text>Monomer.</text>
</comment>
<comment type="PTM">
    <text>The N-terminus is blocked.</text>
</comment>
<comment type="similarity">
    <text evidence="2">Belongs to the bacterial glucokinase family.</text>
</comment>
<gene>
    <name type="primary">GK1</name>
</gene>
<sequence>MFSIDLIQQIKEWKRGSTLPICLGCDVGGSGLRVRLSDFHDSAKYVDLGHAKAQKTAELLKVLEDLQQKILQVEPTTVCLGAAIAVAGPIKNNTVILTNWKGPAEERTLSITQLPKGLFPKDRSYFLNDLEAGAYGVIAAYEQSILEENFVQLFTDRAPTGPILAKGRTAVLAMGSGLGAALVTRTPLLKNPLVLPTELGHLQIAPNMATHKYFQDEQELIQHISDHYYGGKLDPEYEDICSGRGLQLAFQFYHKKLTGEVLPLEQIDAGDVAKKAIAGEKDAYNALRAHYIFYLRAAKAIATSLSCESCVLSLDNQVKNHPFVMKIAKELEEEFYEFIRPDWMTSVRVYSQKSILNFNILGTDYMAHAIANKPQ</sequence>